<keyword id="KW-0963">Cytoplasm</keyword>
<keyword id="KW-0275">Fatty acid biosynthesis</keyword>
<keyword id="KW-0276">Fatty acid metabolism</keyword>
<keyword id="KW-0444">Lipid biosynthesis</keyword>
<keyword id="KW-0443">Lipid metabolism</keyword>
<keyword id="KW-0460">Magnesium</keyword>
<keyword id="KW-0479">Metal-binding</keyword>
<keyword id="KW-0808">Transferase</keyword>
<accession>A8GI21</accession>
<proteinExistence type="inferred from homology"/>
<reference key="1">
    <citation type="submission" date="2007-09" db="EMBL/GenBank/DDBJ databases">
        <title>Complete sequence of chromosome of Serratia proteamaculans 568.</title>
        <authorList>
            <consortium name="US DOE Joint Genome Institute"/>
            <person name="Copeland A."/>
            <person name="Lucas S."/>
            <person name="Lapidus A."/>
            <person name="Barry K."/>
            <person name="Glavina del Rio T."/>
            <person name="Dalin E."/>
            <person name="Tice H."/>
            <person name="Pitluck S."/>
            <person name="Chain P."/>
            <person name="Malfatti S."/>
            <person name="Shin M."/>
            <person name="Vergez L."/>
            <person name="Schmutz J."/>
            <person name="Larimer F."/>
            <person name="Land M."/>
            <person name="Hauser L."/>
            <person name="Kyrpides N."/>
            <person name="Kim E."/>
            <person name="Taghavi S."/>
            <person name="Newman L."/>
            <person name="Vangronsveld J."/>
            <person name="van der Lelie D."/>
            <person name="Richardson P."/>
        </authorList>
    </citation>
    <scope>NUCLEOTIDE SEQUENCE [LARGE SCALE GENOMIC DNA]</scope>
    <source>
        <strain>568</strain>
    </source>
</reference>
<protein>
    <recommendedName>
        <fullName evidence="1">Holo-[acyl-carrier-protein] synthase</fullName>
        <shortName evidence="1">Holo-ACP synthase</shortName>
        <ecNumber evidence="1">2.7.8.7</ecNumber>
    </recommendedName>
    <alternativeName>
        <fullName evidence="1">4'-phosphopantetheinyl transferase AcpS</fullName>
    </alternativeName>
</protein>
<name>ACPS_SERP5</name>
<gene>
    <name evidence="1" type="primary">acpS</name>
    <name type="ordered locus">Spro_3665</name>
</gene>
<feature type="chain" id="PRO_1000057673" description="Holo-[acyl-carrier-protein] synthase">
    <location>
        <begin position="1"/>
        <end position="126"/>
    </location>
</feature>
<feature type="binding site" evidence="1">
    <location>
        <position position="9"/>
    </location>
    <ligand>
        <name>Mg(2+)</name>
        <dbReference type="ChEBI" id="CHEBI:18420"/>
    </ligand>
</feature>
<feature type="binding site" evidence="1">
    <location>
        <position position="58"/>
    </location>
    <ligand>
        <name>Mg(2+)</name>
        <dbReference type="ChEBI" id="CHEBI:18420"/>
    </ligand>
</feature>
<evidence type="ECO:0000255" key="1">
    <source>
        <dbReference type="HAMAP-Rule" id="MF_00101"/>
    </source>
</evidence>
<organism>
    <name type="scientific">Serratia proteamaculans (strain 568)</name>
    <dbReference type="NCBI Taxonomy" id="399741"/>
    <lineage>
        <taxon>Bacteria</taxon>
        <taxon>Pseudomonadati</taxon>
        <taxon>Pseudomonadota</taxon>
        <taxon>Gammaproteobacteria</taxon>
        <taxon>Enterobacterales</taxon>
        <taxon>Yersiniaceae</taxon>
        <taxon>Serratia</taxon>
    </lineage>
</organism>
<sequence length="126" mass="13967">MAVLGLGTDIVEMARIEAVVERSGDRLARRVLSEAEWELYQQHQQPVRFLAKRFAVKEAVAKAFGTGIRNGLAFNQFEVFNDGLGKPNIRLHARAAELAKEMGVTSIHVSLADERRYACATVIIEG</sequence>
<dbReference type="EC" id="2.7.8.7" evidence="1"/>
<dbReference type="EMBL" id="CP000826">
    <property type="protein sequence ID" value="ABV42761.1"/>
    <property type="molecule type" value="Genomic_DNA"/>
</dbReference>
<dbReference type="SMR" id="A8GI21"/>
<dbReference type="STRING" id="399741.Spro_3665"/>
<dbReference type="KEGG" id="spe:Spro_3665"/>
<dbReference type="eggNOG" id="COG0736">
    <property type="taxonomic scope" value="Bacteria"/>
</dbReference>
<dbReference type="HOGENOM" id="CLU_089696_3_1_6"/>
<dbReference type="OrthoDB" id="517356at2"/>
<dbReference type="GO" id="GO:0005737">
    <property type="term" value="C:cytoplasm"/>
    <property type="evidence" value="ECO:0007669"/>
    <property type="project" value="UniProtKB-SubCell"/>
</dbReference>
<dbReference type="GO" id="GO:0008897">
    <property type="term" value="F:holo-[acyl-carrier-protein] synthase activity"/>
    <property type="evidence" value="ECO:0007669"/>
    <property type="project" value="UniProtKB-UniRule"/>
</dbReference>
<dbReference type="GO" id="GO:0000287">
    <property type="term" value="F:magnesium ion binding"/>
    <property type="evidence" value="ECO:0007669"/>
    <property type="project" value="UniProtKB-UniRule"/>
</dbReference>
<dbReference type="GO" id="GO:0006633">
    <property type="term" value="P:fatty acid biosynthetic process"/>
    <property type="evidence" value="ECO:0007669"/>
    <property type="project" value="UniProtKB-UniRule"/>
</dbReference>
<dbReference type="FunFam" id="3.90.470.20:FF:000001">
    <property type="entry name" value="Holo-[acyl-carrier-protein] synthase"/>
    <property type="match status" value="1"/>
</dbReference>
<dbReference type="Gene3D" id="3.90.470.20">
    <property type="entry name" value="4'-phosphopantetheinyl transferase domain"/>
    <property type="match status" value="1"/>
</dbReference>
<dbReference type="HAMAP" id="MF_00101">
    <property type="entry name" value="AcpS"/>
    <property type="match status" value="1"/>
</dbReference>
<dbReference type="InterPro" id="IPR008278">
    <property type="entry name" value="4-PPantetheinyl_Trfase_dom"/>
</dbReference>
<dbReference type="InterPro" id="IPR037143">
    <property type="entry name" value="4-PPantetheinyl_Trfase_dom_sf"/>
</dbReference>
<dbReference type="InterPro" id="IPR002582">
    <property type="entry name" value="ACPS"/>
</dbReference>
<dbReference type="InterPro" id="IPR004568">
    <property type="entry name" value="Ppantetheine-prot_Trfase_dom"/>
</dbReference>
<dbReference type="NCBIfam" id="TIGR00516">
    <property type="entry name" value="acpS"/>
    <property type="match status" value="1"/>
</dbReference>
<dbReference type="NCBIfam" id="TIGR00556">
    <property type="entry name" value="pantethn_trn"/>
    <property type="match status" value="1"/>
</dbReference>
<dbReference type="Pfam" id="PF01648">
    <property type="entry name" value="ACPS"/>
    <property type="match status" value="1"/>
</dbReference>
<dbReference type="SUPFAM" id="SSF56214">
    <property type="entry name" value="4'-phosphopantetheinyl transferase"/>
    <property type="match status" value="1"/>
</dbReference>
<comment type="function">
    <text evidence="1">Transfers the 4'-phosphopantetheine moiety from coenzyme A to a Ser of acyl-carrier-protein.</text>
</comment>
<comment type="catalytic activity">
    <reaction evidence="1">
        <text>apo-[ACP] + CoA = holo-[ACP] + adenosine 3',5'-bisphosphate + H(+)</text>
        <dbReference type="Rhea" id="RHEA:12068"/>
        <dbReference type="Rhea" id="RHEA-COMP:9685"/>
        <dbReference type="Rhea" id="RHEA-COMP:9690"/>
        <dbReference type="ChEBI" id="CHEBI:15378"/>
        <dbReference type="ChEBI" id="CHEBI:29999"/>
        <dbReference type="ChEBI" id="CHEBI:57287"/>
        <dbReference type="ChEBI" id="CHEBI:58343"/>
        <dbReference type="ChEBI" id="CHEBI:64479"/>
        <dbReference type="EC" id="2.7.8.7"/>
    </reaction>
</comment>
<comment type="cofactor">
    <cofactor evidence="1">
        <name>Mg(2+)</name>
        <dbReference type="ChEBI" id="CHEBI:18420"/>
    </cofactor>
</comment>
<comment type="subcellular location">
    <subcellularLocation>
        <location evidence="1">Cytoplasm</location>
    </subcellularLocation>
</comment>
<comment type="similarity">
    <text evidence="1">Belongs to the P-Pant transferase superfamily. AcpS family.</text>
</comment>